<organism>
    <name type="scientific">Psychrobacter sp. (strain PRwf-1)</name>
    <dbReference type="NCBI Taxonomy" id="349106"/>
    <lineage>
        <taxon>Bacteria</taxon>
        <taxon>Pseudomonadati</taxon>
        <taxon>Pseudomonadota</taxon>
        <taxon>Gammaproteobacteria</taxon>
        <taxon>Moraxellales</taxon>
        <taxon>Moraxellaceae</taxon>
        <taxon>Psychrobacter</taxon>
    </lineage>
</organism>
<gene>
    <name evidence="1" type="primary">rpsQ</name>
    <name type="ordered locus">PsycPRwf_0435</name>
</gene>
<sequence>MSDDIQQTEVSGTGVGIVTGKVVSNKMDKSITVLIERKVRHPLYGKQIRRSTKIKAHDENNVCKEGDVVRIIETRPISKTKSWKLVDVVETAEKI</sequence>
<name>RS17_PSYWF</name>
<proteinExistence type="inferred from homology"/>
<protein>
    <recommendedName>
        <fullName evidence="1">Small ribosomal subunit protein uS17</fullName>
    </recommendedName>
    <alternativeName>
        <fullName evidence="2">30S ribosomal protein S17</fullName>
    </alternativeName>
</protein>
<comment type="function">
    <text evidence="1">One of the primary rRNA binding proteins, it binds specifically to the 5'-end of 16S ribosomal RNA.</text>
</comment>
<comment type="subunit">
    <text evidence="1">Part of the 30S ribosomal subunit.</text>
</comment>
<comment type="similarity">
    <text evidence="1">Belongs to the universal ribosomal protein uS17 family.</text>
</comment>
<dbReference type="EMBL" id="CP000713">
    <property type="protein sequence ID" value="ABQ93390.1"/>
    <property type="molecule type" value="Genomic_DNA"/>
</dbReference>
<dbReference type="SMR" id="A5WCJ9"/>
<dbReference type="STRING" id="349106.PsycPRwf_0435"/>
<dbReference type="KEGG" id="prw:PsycPRwf_0435"/>
<dbReference type="eggNOG" id="COG0186">
    <property type="taxonomic scope" value="Bacteria"/>
</dbReference>
<dbReference type="HOGENOM" id="CLU_073626_1_1_6"/>
<dbReference type="GO" id="GO:0022627">
    <property type="term" value="C:cytosolic small ribosomal subunit"/>
    <property type="evidence" value="ECO:0007669"/>
    <property type="project" value="TreeGrafter"/>
</dbReference>
<dbReference type="GO" id="GO:0019843">
    <property type="term" value="F:rRNA binding"/>
    <property type="evidence" value="ECO:0007669"/>
    <property type="project" value="UniProtKB-UniRule"/>
</dbReference>
<dbReference type="GO" id="GO:0003735">
    <property type="term" value="F:structural constituent of ribosome"/>
    <property type="evidence" value="ECO:0007669"/>
    <property type="project" value="InterPro"/>
</dbReference>
<dbReference type="GO" id="GO:0006412">
    <property type="term" value="P:translation"/>
    <property type="evidence" value="ECO:0007669"/>
    <property type="project" value="UniProtKB-UniRule"/>
</dbReference>
<dbReference type="CDD" id="cd00364">
    <property type="entry name" value="Ribosomal_uS17"/>
    <property type="match status" value="1"/>
</dbReference>
<dbReference type="Gene3D" id="2.40.50.140">
    <property type="entry name" value="Nucleic acid-binding proteins"/>
    <property type="match status" value="1"/>
</dbReference>
<dbReference type="HAMAP" id="MF_01345_B">
    <property type="entry name" value="Ribosomal_uS17_B"/>
    <property type="match status" value="1"/>
</dbReference>
<dbReference type="InterPro" id="IPR012340">
    <property type="entry name" value="NA-bd_OB-fold"/>
</dbReference>
<dbReference type="InterPro" id="IPR000266">
    <property type="entry name" value="Ribosomal_uS17"/>
</dbReference>
<dbReference type="InterPro" id="IPR019984">
    <property type="entry name" value="Ribosomal_uS17_bact/chlr"/>
</dbReference>
<dbReference type="InterPro" id="IPR019979">
    <property type="entry name" value="Ribosomal_uS17_CS"/>
</dbReference>
<dbReference type="NCBIfam" id="NF004123">
    <property type="entry name" value="PRK05610.1"/>
    <property type="match status" value="1"/>
</dbReference>
<dbReference type="NCBIfam" id="TIGR03635">
    <property type="entry name" value="uS17_bact"/>
    <property type="match status" value="1"/>
</dbReference>
<dbReference type="PANTHER" id="PTHR10744">
    <property type="entry name" value="40S RIBOSOMAL PROTEIN S11 FAMILY MEMBER"/>
    <property type="match status" value="1"/>
</dbReference>
<dbReference type="PANTHER" id="PTHR10744:SF1">
    <property type="entry name" value="SMALL RIBOSOMAL SUBUNIT PROTEIN US17M"/>
    <property type="match status" value="1"/>
</dbReference>
<dbReference type="Pfam" id="PF00366">
    <property type="entry name" value="Ribosomal_S17"/>
    <property type="match status" value="1"/>
</dbReference>
<dbReference type="PRINTS" id="PR00973">
    <property type="entry name" value="RIBOSOMALS17"/>
</dbReference>
<dbReference type="SUPFAM" id="SSF50249">
    <property type="entry name" value="Nucleic acid-binding proteins"/>
    <property type="match status" value="1"/>
</dbReference>
<dbReference type="PROSITE" id="PS00056">
    <property type="entry name" value="RIBOSOMAL_S17"/>
    <property type="match status" value="1"/>
</dbReference>
<reference key="1">
    <citation type="submission" date="2007-05" db="EMBL/GenBank/DDBJ databases">
        <title>Complete sequence of chromosome of Psychrobacter sp. PRwf-1.</title>
        <authorList>
            <consortium name="US DOE Joint Genome Institute"/>
            <person name="Copeland A."/>
            <person name="Lucas S."/>
            <person name="Lapidus A."/>
            <person name="Barry K."/>
            <person name="Detter J.C."/>
            <person name="Glavina del Rio T."/>
            <person name="Hammon N."/>
            <person name="Israni S."/>
            <person name="Dalin E."/>
            <person name="Tice H."/>
            <person name="Pitluck S."/>
            <person name="Chain P."/>
            <person name="Malfatti S."/>
            <person name="Shin M."/>
            <person name="Vergez L."/>
            <person name="Schmutz J."/>
            <person name="Larimer F."/>
            <person name="Land M."/>
            <person name="Hauser L."/>
            <person name="Kyrpides N."/>
            <person name="Kim E."/>
            <person name="Tiedje J."/>
            <person name="Richardson P."/>
        </authorList>
    </citation>
    <scope>NUCLEOTIDE SEQUENCE [LARGE SCALE GENOMIC DNA]</scope>
    <source>
        <strain>PRwf-1</strain>
    </source>
</reference>
<keyword id="KW-0687">Ribonucleoprotein</keyword>
<keyword id="KW-0689">Ribosomal protein</keyword>
<keyword id="KW-0694">RNA-binding</keyword>
<keyword id="KW-0699">rRNA-binding</keyword>
<accession>A5WCJ9</accession>
<evidence type="ECO:0000255" key="1">
    <source>
        <dbReference type="HAMAP-Rule" id="MF_01345"/>
    </source>
</evidence>
<evidence type="ECO:0000305" key="2"/>
<feature type="chain" id="PRO_1000073346" description="Small ribosomal subunit protein uS17">
    <location>
        <begin position="1"/>
        <end position="95"/>
    </location>
</feature>